<proteinExistence type="evidence at protein level"/>
<evidence type="ECO:0000255" key="1">
    <source>
        <dbReference type="HAMAP-Rule" id="MF_01379"/>
    </source>
</evidence>
<evidence type="ECO:0000269" key="2">
    <source>
    </source>
</evidence>
<keyword id="KW-0007">Acetylation</keyword>
<keyword id="KW-0106">Calcium</keyword>
<keyword id="KW-0148">Chlorophyll</keyword>
<keyword id="KW-0150">Chloroplast</keyword>
<keyword id="KW-0157">Chromophore</keyword>
<keyword id="KW-0249">Electron transport</keyword>
<keyword id="KW-0359">Herbicide resistance</keyword>
<keyword id="KW-0408">Iron</keyword>
<keyword id="KW-0460">Magnesium</keyword>
<keyword id="KW-0464">Manganese</keyword>
<keyword id="KW-0472">Membrane</keyword>
<keyword id="KW-0479">Metal-binding</keyword>
<keyword id="KW-0560">Oxidoreductase</keyword>
<keyword id="KW-0597">Phosphoprotein</keyword>
<keyword id="KW-0602">Photosynthesis</keyword>
<keyword id="KW-0604">Photosystem II</keyword>
<keyword id="KW-0934">Plastid</keyword>
<keyword id="KW-0793">Thylakoid</keyword>
<keyword id="KW-0812">Transmembrane</keyword>
<keyword id="KW-1133">Transmembrane helix</keyword>
<keyword id="KW-0813">Transport</keyword>
<name>PSBA_SOLNI</name>
<dbReference type="EC" id="1.10.3.9" evidence="1"/>
<dbReference type="EMBL" id="X01651">
    <property type="protein sequence ID" value="CAA25815.1"/>
    <property type="molecule type" value="Genomic_DNA"/>
</dbReference>
<dbReference type="PIR" id="A37573">
    <property type="entry name" value="FMSX3N"/>
</dbReference>
<dbReference type="RefSeq" id="YP_009171848.1">
    <property type="nucleotide sequence ID" value="NC_028070.2"/>
</dbReference>
<dbReference type="SMR" id="P69563"/>
<dbReference type="GeneID" id="26047316"/>
<dbReference type="GO" id="GO:0009535">
    <property type="term" value="C:chloroplast thylakoid membrane"/>
    <property type="evidence" value="ECO:0007669"/>
    <property type="project" value="UniProtKB-SubCell"/>
</dbReference>
<dbReference type="GO" id="GO:0009523">
    <property type="term" value="C:photosystem II"/>
    <property type="evidence" value="ECO:0007669"/>
    <property type="project" value="UniProtKB-KW"/>
</dbReference>
<dbReference type="GO" id="GO:0016168">
    <property type="term" value="F:chlorophyll binding"/>
    <property type="evidence" value="ECO:0007669"/>
    <property type="project" value="UniProtKB-UniRule"/>
</dbReference>
<dbReference type="GO" id="GO:0045156">
    <property type="term" value="F:electron transporter, transferring electrons within the cyclic electron transport pathway of photosynthesis activity"/>
    <property type="evidence" value="ECO:0007669"/>
    <property type="project" value="InterPro"/>
</dbReference>
<dbReference type="GO" id="GO:0005506">
    <property type="term" value="F:iron ion binding"/>
    <property type="evidence" value="ECO:0007669"/>
    <property type="project" value="UniProtKB-UniRule"/>
</dbReference>
<dbReference type="GO" id="GO:0016682">
    <property type="term" value="F:oxidoreductase activity, acting on diphenols and related substances as donors, oxygen as acceptor"/>
    <property type="evidence" value="ECO:0007669"/>
    <property type="project" value="UniProtKB-UniRule"/>
</dbReference>
<dbReference type="GO" id="GO:0010242">
    <property type="term" value="F:oxygen evolving activity"/>
    <property type="evidence" value="ECO:0007669"/>
    <property type="project" value="UniProtKB-EC"/>
</dbReference>
<dbReference type="GO" id="GO:0009772">
    <property type="term" value="P:photosynthetic electron transport in photosystem II"/>
    <property type="evidence" value="ECO:0007669"/>
    <property type="project" value="InterPro"/>
</dbReference>
<dbReference type="GO" id="GO:0009635">
    <property type="term" value="P:response to herbicide"/>
    <property type="evidence" value="ECO:0007669"/>
    <property type="project" value="UniProtKB-KW"/>
</dbReference>
<dbReference type="CDD" id="cd09289">
    <property type="entry name" value="Photosystem-II_D1"/>
    <property type="match status" value="1"/>
</dbReference>
<dbReference type="FunFam" id="1.20.85.10:FF:000002">
    <property type="entry name" value="Photosystem II protein D1"/>
    <property type="match status" value="1"/>
</dbReference>
<dbReference type="Gene3D" id="1.20.85.10">
    <property type="entry name" value="Photosystem II protein D1-like"/>
    <property type="match status" value="1"/>
</dbReference>
<dbReference type="HAMAP" id="MF_01379">
    <property type="entry name" value="PSII_PsbA_D1"/>
    <property type="match status" value="1"/>
</dbReference>
<dbReference type="InterPro" id="IPR055266">
    <property type="entry name" value="D1/D2"/>
</dbReference>
<dbReference type="InterPro" id="IPR036854">
    <property type="entry name" value="Photo_II_D1/D2_sf"/>
</dbReference>
<dbReference type="InterPro" id="IPR000484">
    <property type="entry name" value="Photo_RC_L/M"/>
</dbReference>
<dbReference type="InterPro" id="IPR055265">
    <property type="entry name" value="Photo_RC_L/M_CS"/>
</dbReference>
<dbReference type="InterPro" id="IPR005867">
    <property type="entry name" value="PSII_D1"/>
</dbReference>
<dbReference type="NCBIfam" id="TIGR01151">
    <property type="entry name" value="psbA"/>
    <property type="match status" value="1"/>
</dbReference>
<dbReference type="PANTHER" id="PTHR33149:SF12">
    <property type="entry name" value="PHOTOSYSTEM II D2 PROTEIN"/>
    <property type="match status" value="1"/>
</dbReference>
<dbReference type="PANTHER" id="PTHR33149">
    <property type="entry name" value="PHOTOSYSTEM II PROTEIN D1"/>
    <property type="match status" value="1"/>
</dbReference>
<dbReference type="Pfam" id="PF00124">
    <property type="entry name" value="Photo_RC"/>
    <property type="match status" value="1"/>
</dbReference>
<dbReference type="PRINTS" id="PR00256">
    <property type="entry name" value="REACTNCENTRE"/>
</dbReference>
<dbReference type="SUPFAM" id="SSF81483">
    <property type="entry name" value="Bacterial photosystem II reaction centre, L and M subunits"/>
    <property type="match status" value="1"/>
</dbReference>
<dbReference type="PROSITE" id="PS00244">
    <property type="entry name" value="REACTION_CENTER"/>
    <property type="match status" value="1"/>
</dbReference>
<gene>
    <name evidence="1" type="primary">psbA</name>
</gene>
<geneLocation type="chloroplast"/>
<comment type="function">
    <text evidence="1">Photosystem II (PSII) is a light-driven water:plastoquinone oxidoreductase that uses light energy to abstract electrons from H(2)O, generating O(2) and a proton gradient subsequently used for ATP formation. It consists of a core antenna complex that captures photons, and an electron transfer chain that converts photonic excitation into a charge separation. The D1/D2 (PsbA/PsbD) reaction center heterodimer binds P680, the primary electron donor of PSII as well as several subsequent electron acceptors.</text>
</comment>
<comment type="catalytic activity">
    <reaction evidence="1">
        <text>2 a plastoquinone + 4 hnu + 2 H2O = 2 a plastoquinol + O2</text>
        <dbReference type="Rhea" id="RHEA:36359"/>
        <dbReference type="Rhea" id="RHEA-COMP:9561"/>
        <dbReference type="Rhea" id="RHEA-COMP:9562"/>
        <dbReference type="ChEBI" id="CHEBI:15377"/>
        <dbReference type="ChEBI" id="CHEBI:15379"/>
        <dbReference type="ChEBI" id="CHEBI:17757"/>
        <dbReference type="ChEBI" id="CHEBI:30212"/>
        <dbReference type="ChEBI" id="CHEBI:62192"/>
        <dbReference type="EC" id="1.10.3.9"/>
    </reaction>
</comment>
<comment type="cofactor">
    <text evidence="1">The D1/D2 heterodimer binds P680, chlorophylls that are the primary electron donor of PSII, and subsequent electron acceptors. It shares a non-heme iron and each subunit binds pheophytin, quinone, additional chlorophylls, carotenoids and lipids. D1 provides most of the ligands for the Mn4-Ca-O5 cluster of the oxygen-evolving complex (OEC). There is also a Cl(-1) ion associated with D1 and D2, which is required for oxygen evolution. The PSII complex binds additional chlorophylls, carotenoids and specific lipids.</text>
</comment>
<comment type="subunit">
    <text evidence="1">PSII is composed of 1 copy each of membrane proteins PsbA, PsbB, PsbC, PsbD, PsbE, PsbF, PsbH, PsbI, PsbJ, PsbK, PsbL, PsbM, PsbT, PsbX, PsbY, PsbZ, Psb30/Ycf12, at least 3 peripheral proteins of the oxygen-evolving complex and a large number of cofactors. It forms dimeric complexes.</text>
</comment>
<comment type="subcellular location">
    <subcellularLocation>
        <location evidence="1">Plastid</location>
        <location evidence="1">Chloroplast thylakoid membrane</location>
        <topology evidence="1">Multi-pass membrane protein</topology>
    </subcellularLocation>
</comment>
<comment type="PTM">
    <text evidence="1">Tyr-161 forms a radical intermediate that is referred to as redox-active TyrZ, YZ or Y-Z.</text>
</comment>
<comment type="PTM">
    <text evidence="1">C-terminally processed by CTPA; processing is essential to allow assembly of the oxygen-evolving complex and thus photosynthetic growth.</text>
</comment>
<comment type="miscellaneous">
    <text evidence="1">2 of the reaction center chlorophylls (ChlD1 and ChlD2) are entirely coordinated by water.</text>
</comment>
<comment type="miscellaneous">
    <text evidence="1">Herbicides such as atrazine, BNT, diuron or ioxynil bind in the Q(B) binding site and block subsequent electron transfer.</text>
</comment>
<comment type="similarity">
    <text evidence="1">Belongs to the reaction center PufL/M/PsbA/D family.</text>
</comment>
<accession>P69563</accession>
<accession>P02955</accession>
<feature type="initiator methionine" description="Removed" evidence="1">
    <location>
        <position position="1"/>
    </location>
</feature>
<feature type="chain" id="PRO_0000090470" description="Photosystem II protein D1" evidence="1">
    <location>
        <begin position="2"/>
        <end position="344"/>
    </location>
</feature>
<feature type="propeptide" id="PRO_0000316484" evidence="1">
    <location>
        <begin position="345"/>
        <end position="353"/>
    </location>
</feature>
<feature type="transmembrane region" description="Helical" evidence="1">
    <location>
        <begin position="29"/>
        <end position="46"/>
    </location>
</feature>
<feature type="transmembrane region" description="Helical" evidence="1">
    <location>
        <begin position="118"/>
        <end position="133"/>
    </location>
</feature>
<feature type="transmembrane region" description="Helical" evidence="1">
    <location>
        <begin position="142"/>
        <end position="156"/>
    </location>
</feature>
<feature type="transmembrane region" description="Helical" evidence="1">
    <location>
        <begin position="197"/>
        <end position="218"/>
    </location>
</feature>
<feature type="transmembrane region" description="Helical" evidence="1">
    <location>
        <begin position="274"/>
        <end position="288"/>
    </location>
</feature>
<feature type="binding site" description="axial binding residue" evidence="1">
    <location>
        <position position="118"/>
    </location>
    <ligand>
        <name>chlorophyll a</name>
        <dbReference type="ChEBI" id="CHEBI:58416"/>
        <label>ChlzD1</label>
    </ligand>
    <ligandPart>
        <name>Mg</name>
        <dbReference type="ChEBI" id="CHEBI:25107"/>
    </ligandPart>
</feature>
<feature type="binding site" evidence="1">
    <location>
        <position position="126"/>
    </location>
    <ligand>
        <name>pheophytin a</name>
        <dbReference type="ChEBI" id="CHEBI:136840"/>
        <label>D1</label>
    </ligand>
</feature>
<feature type="binding site" evidence="1">
    <location>
        <position position="170"/>
    </location>
    <ligand>
        <name>[CaMn4O5] cluster</name>
        <dbReference type="ChEBI" id="CHEBI:189552"/>
    </ligand>
</feature>
<feature type="binding site" evidence="1">
    <location>
        <position position="189"/>
    </location>
    <ligand>
        <name>[CaMn4O5] cluster</name>
        <dbReference type="ChEBI" id="CHEBI:189552"/>
    </ligand>
</feature>
<feature type="binding site" description="axial binding residue" evidence="1">
    <location>
        <position position="198"/>
    </location>
    <ligand>
        <name>chlorophyll a</name>
        <dbReference type="ChEBI" id="CHEBI:58416"/>
        <label>PD1</label>
    </ligand>
    <ligandPart>
        <name>Mg</name>
        <dbReference type="ChEBI" id="CHEBI:25107"/>
    </ligandPart>
</feature>
<feature type="binding site" evidence="1">
    <location>
        <position position="215"/>
    </location>
    <ligand>
        <name>a quinone</name>
        <dbReference type="ChEBI" id="CHEBI:132124"/>
        <label>B</label>
    </ligand>
</feature>
<feature type="binding site" evidence="1">
    <location>
        <position position="215"/>
    </location>
    <ligand>
        <name>Fe cation</name>
        <dbReference type="ChEBI" id="CHEBI:24875"/>
        <note>ligand shared with heterodimeric partner</note>
    </ligand>
</feature>
<feature type="binding site" evidence="1">
    <location>
        <begin position="264"/>
        <end position="265"/>
    </location>
    <ligand>
        <name>a quinone</name>
        <dbReference type="ChEBI" id="CHEBI:132124"/>
        <label>B</label>
    </ligand>
</feature>
<feature type="binding site" evidence="1">
    <location>
        <position position="272"/>
    </location>
    <ligand>
        <name>Fe cation</name>
        <dbReference type="ChEBI" id="CHEBI:24875"/>
        <note>ligand shared with heterodimeric partner</note>
    </ligand>
</feature>
<feature type="binding site" evidence="1">
    <location>
        <position position="332"/>
    </location>
    <ligand>
        <name>[CaMn4O5] cluster</name>
        <dbReference type="ChEBI" id="CHEBI:189552"/>
    </ligand>
</feature>
<feature type="binding site" evidence="1">
    <location>
        <position position="333"/>
    </location>
    <ligand>
        <name>[CaMn4O5] cluster</name>
        <dbReference type="ChEBI" id="CHEBI:189552"/>
    </ligand>
</feature>
<feature type="binding site" evidence="1">
    <location>
        <position position="342"/>
    </location>
    <ligand>
        <name>[CaMn4O5] cluster</name>
        <dbReference type="ChEBI" id="CHEBI:189552"/>
    </ligand>
</feature>
<feature type="binding site" evidence="1">
    <location>
        <position position="344"/>
    </location>
    <ligand>
        <name>[CaMn4O5] cluster</name>
        <dbReference type="ChEBI" id="CHEBI:189552"/>
    </ligand>
</feature>
<feature type="site" description="Tyrosine radical intermediate" evidence="1">
    <location>
        <position position="161"/>
    </location>
</feature>
<feature type="site" description="Stabilizes free radical intermediate" evidence="1">
    <location>
        <position position="190"/>
    </location>
</feature>
<feature type="site" description="Cleavage; by CTPA" evidence="1">
    <location>
        <begin position="344"/>
        <end position="345"/>
    </location>
</feature>
<feature type="modified residue" description="N-acetylthreonine" evidence="1">
    <location>
        <position position="2"/>
    </location>
</feature>
<feature type="modified residue" description="Phosphothreonine" evidence="1">
    <location>
        <position position="2"/>
    </location>
</feature>
<feature type="mutagenesis site" description="Herbicide resistance." evidence="2">
    <original>S</original>
    <variation>G</variation>
    <location>
        <position position="264"/>
    </location>
</feature>
<protein>
    <recommendedName>
        <fullName evidence="1">Photosystem II protein D1</fullName>
        <shortName evidence="1">PSII D1 protein</shortName>
        <ecNumber evidence="1">1.10.3.9</ecNumber>
    </recommendedName>
    <alternativeName>
        <fullName evidence="1">Photosystem II Q(B) protein</fullName>
    </alternativeName>
</protein>
<sequence>MTAILERRESESLWGRFCNWITSTENRLYIGWFGVLMIPTLLTATSVFIIAFIAAPPVDIDGIREPVSGSLLYGNNIISGAIIPTSAAIGLHFYPIWEAASVDEWLYNGGPYELIVLHFLLGVACYMGREWELSFRLGMRPWIAVAYSAPVAAATAVFLIYPIGQGSFSDGMPLGISGTFNFMIVFQAEHNILMHPFHMLGVAGVFGGSLFSAMHGSLVTSSLIRETTENESANEGYRFGQEEETYNIVAAHGYFGRLIFQYASFNNSRSLHFFLAAWPVVGIWFTALGISTMAFNLNGFNFNQSVVDSQGRVINTWADIINRANLGMEVMHERNAHNFPLDLAAIEAPSTNG</sequence>
<reference key="1">
    <citation type="journal article" date="1984" name="Nucleic Acids Res.">
        <title>Chloroplast-coded atrazine resistance in Solanum nigrum: psbA loci from susceptible and resistant biotypes are isogenic except for a single codon change.</title>
        <authorList>
            <person name="Goloubinoff P."/>
            <person name="Edelman M."/>
            <person name="Hallick R.B."/>
        </authorList>
    </citation>
    <scope>NUCLEOTIDE SEQUENCE [GENOMIC DNA]</scope>
    <scope>MUTAGENESIS OF SER-264</scope>
</reference>
<organism>
    <name type="scientific">Solanum nigrum</name>
    <name type="common">Black nightshade</name>
    <dbReference type="NCBI Taxonomy" id="4112"/>
    <lineage>
        <taxon>Eukaryota</taxon>
        <taxon>Viridiplantae</taxon>
        <taxon>Streptophyta</taxon>
        <taxon>Embryophyta</taxon>
        <taxon>Tracheophyta</taxon>
        <taxon>Spermatophyta</taxon>
        <taxon>Magnoliopsida</taxon>
        <taxon>eudicotyledons</taxon>
        <taxon>Gunneridae</taxon>
        <taxon>Pentapetalae</taxon>
        <taxon>asterids</taxon>
        <taxon>lamiids</taxon>
        <taxon>Solanales</taxon>
        <taxon>Solanaceae</taxon>
        <taxon>Solanoideae</taxon>
        <taxon>Solaneae</taxon>
        <taxon>Solanum</taxon>
    </lineage>
</organism>